<sequence length="186" mass="21679">MLILLDQDGVLADFEHAFIDAWRKRHPDIEPVAFEERKSFHIREDYAPELRGLAEAIYTAPGFIRDLPPVPGAVEAFRELLALGMDVRICSSPLMQFENCVAEKYLWVERHLGRDATQRLILTRDKTLVQGDLLIDDRPVITGAARPRWRHIIYDAPYNRDQTDRPRLDWRNWRNVLAGELYRSDA</sequence>
<proteinExistence type="inferred from homology"/>
<gene>
    <name type="ordered locus">BP0294</name>
</gene>
<dbReference type="EC" id="3.1.3.-"/>
<dbReference type="EMBL" id="BX640411">
    <property type="protein sequence ID" value="CAE40672.1"/>
    <property type="molecule type" value="Genomic_DNA"/>
</dbReference>
<dbReference type="RefSeq" id="NP_879172.1">
    <property type="nucleotide sequence ID" value="NC_002929.2"/>
</dbReference>
<dbReference type="RefSeq" id="WP_004566083.1">
    <property type="nucleotide sequence ID" value="NZ_CP039022.1"/>
</dbReference>
<dbReference type="SMR" id="Q7W066"/>
<dbReference type="STRING" id="257313.BP0294"/>
<dbReference type="PaxDb" id="257313-BP0294"/>
<dbReference type="KEGG" id="bpe:BP0294"/>
<dbReference type="PATRIC" id="fig|257313.5.peg.317"/>
<dbReference type="eggNOG" id="COG4502">
    <property type="taxonomic scope" value="Bacteria"/>
</dbReference>
<dbReference type="HOGENOM" id="CLU_100259_0_0_4"/>
<dbReference type="Proteomes" id="UP000002676">
    <property type="component" value="Chromosome"/>
</dbReference>
<dbReference type="GO" id="GO:0008253">
    <property type="term" value="F:5'-nucleotidase activity"/>
    <property type="evidence" value="ECO:0007669"/>
    <property type="project" value="InterPro"/>
</dbReference>
<dbReference type="GO" id="GO:0046872">
    <property type="term" value="F:metal ion binding"/>
    <property type="evidence" value="ECO:0007669"/>
    <property type="project" value="UniProtKB-KW"/>
</dbReference>
<dbReference type="GO" id="GO:0009223">
    <property type="term" value="P:pyrimidine deoxyribonucleotide catabolic process"/>
    <property type="evidence" value="ECO:0007669"/>
    <property type="project" value="TreeGrafter"/>
</dbReference>
<dbReference type="CDD" id="cd02587">
    <property type="entry name" value="HAD_5-3dNT"/>
    <property type="match status" value="1"/>
</dbReference>
<dbReference type="Gene3D" id="1.10.40.40">
    <property type="entry name" value="Deoxyribonucleotidase, domain 2"/>
    <property type="match status" value="1"/>
</dbReference>
<dbReference type="Gene3D" id="3.40.50.1000">
    <property type="entry name" value="HAD superfamily/HAD-like"/>
    <property type="match status" value="1"/>
</dbReference>
<dbReference type="InterPro" id="IPR010708">
    <property type="entry name" value="5'(3')-deoxyribonucleotidase"/>
</dbReference>
<dbReference type="InterPro" id="IPR036412">
    <property type="entry name" value="HAD-like_sf"/>
</dbReference>
<dbReference type="InterPro" id="IPR023214">
    <property type="entry name" value="HAD_sf"/>
</dbReference>
<dbReference type="PANTHER" id="PTHR16504">
    <property type="entry name" value="5'(3')-DEOXYRIBONUCLEOTIDASE"/>
    <property type="match status" value="1"/>
</dbReference>
<dbReference type="PANTHER" id="PTHR16504:SF4">
    <property type="entry name" value="5'(3')-DEOXYRIBONUCLEOTIDASE"/>
    <property type="match status" value="1"/>
</dbReference>
<dbReference type="Pfam" id="PF06941">
    <property type="entry name" value="NT5C"/>
    <property type="match status" value="1"/>
</dbReference>
<dbReference type="SFLD" id="SFLDG01145">
    <property type="entry name" value="C1.2.1"/>
    <property type="match status" value="1"/>
</dbReference>
<dbReference type="SFLD" id="SFLDG01126">
    <property type="entry name" value="C1.2:_Nucleotidase_Like"/>
    <property type="match status" value="1"/>
</dbReference>
<dbReference type="SUPFAM" id="SSF56784">
    <property type="entry name" value="HAD-like"/>
    <property type="match status" value="1"/>
</dbReference>
<keyword id="KW-0378">Hydrolase</keyword>
<keyword id="KW-0460">Magnesium</keyword>
<keyword id="KW-0479">Metal-binding</keyword>
<keyword id="KW-1185">Reference proteome</keyword>
<accession>Q7W066</accession>
<reference key="1">
    <citation type="journal article" date="2003" name="Nat. Genet.">
        <title>Comparative analysis of the genome sequences of Bordetella pertussis, Bordetella parapertussis and Bordetella bronchiseptica.</title>
        <authorList>
            <person name="Parkhill J."/>
            <person name="Sebaihia M."/>
            <person name="Preston A."/>
            <person name="Murphy L.D."/>
            <person name="Thomson N.R."/>
            <person name="Harris D.E."/>
            <person name="Holden M.T.G."/>
            <person name="Churcher C.M."/>
            <person name="Bentley S.D."/>
            <person name="Mungall K.L."/>
            <person name="Cerdeno-Tarraga A.-M."/>
            <person name="Temple L."/>
            <person name="James K.D."/>
            <person name="Harris B."/>
            <person name="Quail M.A."/>
            <person name="Achtman M."/>
            <person name="Atkin R."/>
            <person name="Baker S."/>
            <person name="Basham D."/>
            <person name="Bason N."/>
            <person name="Cherevach I."/>
            <person name="Chillingworth T."/>
            <person name="Collins M."/>
            <person name="Cronin A."/>
            <person name="Davis P."/>
            <person name="Doggett J."/>
            <person name="Feltwell T."/>
            <person name="Goble A."/>
            <person name="Hamlin N."/>
            <person name="Hauser H."/>
            <person name="Holroyd S."/>
            <person name="Jagels K."/>
            <person name="Leather S."/>
            <person name="Moule S."/>
            <person name="Norberczak H."/>
            <person name="O'Neil S."/>
            <person name="Ormond D."/>
            <person name="Price C."/>
            <person name="Rabbinowitsch E."/>
            <person name="Rutter S."/>
            <person name="Sanders M."/>
            <person name="Saunders D."/>
            <person name="Seeger K."/>
            <person name="Sharp S."/>
            <person name="Simmonds M."/>
            <person name="Skelton J."/>
            <person name="Squares R."/>
            <person name="Squares S."/>
            <person name="Stevens K."/>
            <person name="Unwin L."/>
            <person name="Whitehead S."/>
            <person name="Barrell B.G."/>
            <person name="Maskell D.J."/>
        </authorList>
    </citation>
    <scope>NUCLEOTIDE SEQUENCE [LARGE SCALE GENOMIC DNA]</scope>
    <source>
        <strain>Tohama I / ATCC BAA-589 / NCTC 13251</strain>
    </source>
</reference>
<comment type="function">
    <text evidence="3">Dephosphorylates the 5' and 2'(3')-phosphates of deoxyribonucleotides.</text>
</comment>
<comment type="cofactor">
    <cofactor evidence="2">
        <name>Mg(2+)</name>
        <dbReference type="ChEBI" id="CHEBI:18420"/>
    </cofactor>
</comment>
<comment type="similarity">
    <text evidence="3">Belongs to the 5'(3')-deoxyribonucleotidase family.</text>
</comment>
<name>53DR_BORPE</name>
<evidence type="ECO:0000250" key="1">
    <source>
        <dbReference type="UniProtKB" id="Q8CTG7"/>
    </source>
</evidence>
<evidence type="ECO:0000250" key="2">
    <source>
        <dbReference type="UniProtKB" id="Q97JQ5"/>
    </source>
</evidence>
<evidence type="ECO:0000305" key="3"/>
<protein>
    <recommendedName>
        <fullName>Putative 5'(3')-deoxyribonucleotidase</fullName>
        <ecNumber>3.1.3.-</ecNumber>
    </recommendedName>
</protein>
<organism>
    <name type="scientific">Bordetella pertussis (strain Tohama I / ATCC BAA-589 / NCTC 13251)</name>
    <dbReference type="NCBI Taxonomy" id="257313"/>
    <lineage>
        <taxon>Bacteria</taxon>
        <taxon>Pseudomonadati</taxon>
        <taxon>Pseudomonadota</taxon>
        <taxon>Betaproteobacteria</taxon>
        <taxon>Burkholderiales</taxon>
        <taxon>Alcaligenaceae</taxon>
        <taxon>Bordetella</taxon>
    </lineage>
</organism>
<feature type="chain" id="PRO_0000164377" description="Putative 5'(3')-deoxyribonucleotidase">
    <location>
        <begin position="1"/>
        <end position="186"/>
    </location>
</feature>
<feature type="active site" description="Nucleophile" evidence="3">
    <location>
        <position position="6"/>
    </location>
</feature>
<feature type="active site" description="Proton donor" evidence="3">
    <location>
        <position position="8"/>
    </location>
</feature>
<feature type="binding site" evidence="1">
    <location>
        <position position="6"/>
    </location>
    <ligand>
        <name>Mg(2+)</name>
        <dbReference type="ChEBI" id="CHEBI:18420"/>
    </ligand>
</feature>
<feature type="binding site" evidence="1">
    <location>
        <position position="8"/>
    </location>
    <ligand>
        <name>Mg(2+)</name>
        <dbReference type="ChEBI" id="CHEBI:18420"/>
    </ligand>
</feature>
<feature type="binding site" evidence="1">
    <location>
        <position position="137"/>
    </location>
    <ligand>
        <name>Mg(2+)</name>
        <dbReference type="ChEBI" id="CHEBI:18420"/>
    </ligand>
</feature>